<comment type="similarity">
    <text evidence="1">Belongs to the UPF0173 family.</text>
</comment>
<comment type="sequence caution" evidence="2">
    <conflict type="erroneous initiation">
        <sequence resource="EMBL-CDS" id="AAY80832"/>
    </conflict>
</comment>
<organism>
    <name type="scientific">Sulfolobus acidocaldarius (strain ATCC 33909 / DSM 639 / JCM 8929 / NBRC 15157 / NCIMB 11770)</name>
    <dbReference type="NCBI Taxonomy" id="330779"/>
    <lineage>
        <taxon>Archaea</taxon>
        <taxon>Thermoproteota</taxon>
        <taxon>Thermoprotei</taxon>
        <taxon>Sulfolobales</taxon>
        <taxon>Sulfolobaceae</taxon>
        <taxon>Sulfolobus</taxon>
    </lineage>
</organism>
<keyword id="KW-0378">Hydrolase</keyword>
<keyword id="KW-1185">Reference proteome</keyword>
<dbReference type="EMBL" id="CP000077">
    <property type="protein sequence ID" value="AAY80832.1"/>
    <property type="status" value="ALT_INIT"/>
    <property type="molecule type" value="Genomic_DNA"/>
</dbReference>
<dbReference type="RefSeq" id="WP_015385626.1">
    <property type="nucleotide sequence ID" value="NC_007181.1"/>
</dbReference>
<dbReference type="SMR" id="Q4J8P8"/>
<dbReference type="STRING" id="330779.Saci_1512"/>
<dbReference type="GeneID" id="14552010"/>
<dbReference type="KEGG" id="sai:Saci_1512"/>
<dbReference type="PATRIC" id="fig|330779.12.peg.1457"/>
<dbReference type="eggNOG" id="arCOG00497">
    <property type="taxonomic scope" value="Archaea"/>
</dbReference>
<dbReference type="HOGENOM" id="CLU_070010_4_0_2"/>
<dbReference type="Proteomes" id="UP000001018">
    <property type="component" value="Chromosome"/>
</dbReference>
<dbReference type="GO" id="GO:0016787">
    <property type="term" value="F:hydrolase activity"/>
    <property type="evidence" value="ECO:0007669"/>
    <property type="project" value="UniProtKB-UniRule"/>
</dbReference>
<dbReference type="Gene3D" id="3.60.15.10">
    <property type="entry name" value="Ribonuclease Z/Hydroxyacylglutathione hydrolase-like"/>
    <property type="match status" value="1"/>
</dbReference>
<dbReference type="HAMAP" id="MF_00457">
    <property type="entry name" value="UPF0173"/>
    <property type="match status" value="1"/>
</dbReference>
<dbReference type="InterPro" id="IPR001279">
    <property type="entry name" value="Metallo-B-lactamas"/>
</dbReference>
<dbReference type="InterPro" id="IPR036866">
    <property type="entry name" value="RibonucZ/Hydroxyglut_hydro"/>
</dbReference>
<dbReference type="InterPro" id="IPR022877">
    <property type="entry name" value="UPF0173"/>
</dbReference>
<dbReference type="InterPro" id="IPR050114">
    <property type="entry name" value="UPF0173_UPF0282_UlaG_hydrolase"/>
</dbReference>
<dbReference type="NCBIfam" id="NF001911">
    <property type="entry name" value="PRK00685.1"/>
    <property type="match status" value="1"/>
</dbReference>
<dbReference type="PANTHER" id="PTHR43546:SF3">
    <property type="entry name" value="UPF0173 METAL-DEPENDENT HYDROLASE MJ1163"/>
    <property type="match status" value="1"/>
</dbReference>
<dbReference type="PANTHER" id="PTHR43546">
    <property type="entry name" value="UPF0173 METAL-DEPENDENT HYDROLASE MJ1163-RELATED"/>
    <property type="match status" value="1"/>
</dbReference>
<dbReference type="Pfam" id="PF12706">
    <property type="entry name" value="Lactamase_B_2"/>
    <property type="match status" value="1"/>
</dbReference>
<dbReference type="SMART" id="SM00849">
    <property type="entry name" value="Lactamase_B"/>
    <property type="match status" value="1"/>
</dbReference>
<dbReference type="SUPFAM" id="SSF56281">
    <property type="entry name" value="Metallo-hydrolase/oxidoreductase"/>
    <property type="match status" value="1"/>
</dbReference>
<accession>Q4J8P8</accession>
<name>Y1512_SULAC</name>
<sequence>MPQLRWLGHAAVELLINKKRVLIDPMIKDNPLSPVKLDSFNNNVDLIVVTHDHYDHLGDAVELLKMNPKASLFATFDLEVYLSNEYKIDMSRFIPANVGGFIDFDGLKLALTKAVHSSEHSDPSGAIISGENITVYHAGDTGLFEDMKLIGEVFKPDYALLPIGGRFTMDPYQASLAVDMIKPKKYAIPIHFNTWDLIKVNPDDFVKEVSKRGYRALVLKPGQSVEL</sequence>
<proteinExistence type="inferred from homology"/>
<feature type="chain" id="PRO_0000367240" description="UPF0173 metal-dependent hydrolase Saci_1512">
    <location>
        <begin position="1"/>
        <end position="227"/>
    </location>
</feature>
<reference key="1">
    <citation type="journal article" date="2005" name="J. Bacteriol.">
        <title>The genome of Sulfolobus acidocaldarius, a model organism of the Crenarchaeota.</title>
        <authorList>
            <person name="Chen L."/>
            <person name="Bruegger K."/>
            <person name="Skovgaard M."/>
            <person name="Redder P."/>
            <person name="She Q."/>
            <person name="Torarinsson E."/>
            <person name="Greve B."/>
            <person name="Awayez M."/>
            <person name="Zibat A."/>
            <person name="Klenk H.-P."/>
            <person name="Garrett R.A."/>
        </authorList>
    </citation>
    <scope>NUCLEOTIDE SEQUENCE [LARGE SCALE GENOMIC DNA]</scope>
    <source>
        <strain>ATCC 33909 / DSM 639 / JCM 8929 / NBRC 15157 / NCIMB 11770</strain>
    </source>
</reference>
<evidence type="ECO:0000255" key="1">
    <source>
        <dbReference type="HAMAP-Rule" id="MF_00457"/>
    </source>
</evidence>
<evidence type="ECO:0000305" key="2"/>
<protein>
    <recommendedName>
        <fullName evidence="1">UPF0173 metal-dependent hydrolase Saci_1512</fullName>
    </recommendedName>
</protein>
<gene>
    <name type="ordered locus">Saci_1512</name>
</gene>